<sequence length="190" mass="21119">MLLFTLCFFADLENGGKALASPPGKWQKADVRFDSSTAFKSLVVSPDKKTVENVGVPQVVPDNPERFSSSPCVLGSPGFRSGRHFFEVRYGTQREWAVGLAGKSVKRKGYLRLVPEELIWQRGLWFLQRLETDSDKLQKGSGKIVVFLDYSEGKVIFDQDGEVTTVQANFNGEEVVPFYYLGGGVSLTNL</sequence>
<proteinExistence type="evidence at protein level"/>
<organism>
    <name type="scientific">Drysdalia coronoides</name>
    <name type="common">White-lipped snake</name>
    <name type="synonym">Hoplocephalus coronoides</name>
    <dbReference type="NCBI Taxonomy" id="66186"/>
    <lineage>
        <taxon>Eukaryota</taxon>
        <taxon>Metazoa</taxon>
        <taxon>Chordata</taxon>
        <taxon>Craniata</taxon>
        <taxon>Vertebrata</taxon>
        <taxon>Euteleostomi</taxon>
        <taxon>Lepidosauria</taxon>
        <taxon>Squamata</taxon>
        <taxon>Bifurcata</taxon>
        <taxon>Unidentata</taxon>
        <taxon>Episquamata</taxon>
        <taxon>Toxicofera</taxon>
        <taxon>Serpentes</taxon>
        <taxon>Colubroidea</taxon>
        <taxon>Elapidae</taxon>
        <taxon>Notechinae</taxon>
        <taxon>Drysdalia</taxon>
    </lineage>
</organism>
<evidence type="ECO:0000250" key="1"/>
<evidence type="ECO:0000250" key="2">
    <source>
        <dbReference type="UniProtKB" id="P83234"/>
    </source>
</evidence>
<evidence type="ECO:0000255" key="3">
    <source>
        <dbReference type="PROSITE-ProRule" id="PRU00548"/>
    </source>
</evidence>
<evidence type="ECO:0000269" key="4">
    <source>
    </source>
</evidence>
<evidence type="ECO:0000303" key="5">
    <source>
    </source>
</evidence>
<evidence type="ECO:0000305" key="6"/>
<evidence type="ECO:0000305" key="7">
    <source>
    </source>
</evidence>
<dbReference type="EMBL" id="HM627205">
    <property type="protein sequence ID" value="AEH95532.1"/>
    <property type="molecule type" value="mRNA"/>
</dbReference>
<dbReference type="SMR" id="F8RKW2"/>
<dbReference type="GO" id="GO:0005576">
    <property type="term" value="C:extracellular region"/>
    <property type="evidence" value="ECO:0007669"/>
    <property type="project" value="UniProtKB-SubCell"/>
</dbReference>
<dbReference type="GO" id="GO:0090729">
    <property type="term" value="F:toxin activity"/>
    <property type="evidence" value="ECO:0007669"/>
    <property type="project" value="UniProtKB-KW"/>
</dbReference>
<dbReference type="Gene3D" id="2.60.120.920">
    <property type="match status" value="1"/>
</dbReference>
<dbReference type="InterPro" id="IPR001870">
    <property type="entry name" value="B30.2/SPRY"/>
</dbReference>
<dbReference type="InterPro" id="IPR043136">
    <property type="entry name" value="B30.2/SPRY_sf"/>
</dbReference>
<dbReference type="InterPro" id="IPR003879">
    <property type="entry name" value="Butyrophylin_SPRY"/>
</dbReference>
<dbReference type="InterPro" id="IPR013320">
    <property type="entry name" value="ConA-like_dom_sf"/>
</dbReference>
<dbReference type="InterPro" id="IPR006574">
    <property type="entry name" value="PRY"/>
</dbReference>
<dbReference type="InterPro" id="IPR003877">
    <property type="entry name" value="SPRY_dom"/>
</dbReference>
<dbReference type="InterPro" id="IPR050143">
    <property type="entry name" value="TRIM/RBCC"/>
</dbReference>
<dbReference type="PANTHER" id="PTHR24103">
    <property type="entry name" value="E3 UBIQUITIN-PROTEIN LIGASE TRIM"/>
    <property type="match status" value="1"/>
</dbReference>
<dbReference type="Pfam" id="PF13765">
    <property type="entry name" value="PRY"/>
    <property type="match status" value="1"/>
</dbReference>
<dbReference type="Pfam" id="PF00622">
    <property type="entry name" value="SPRY"/>
    <property type="match status" value="1"/>
</dbReference>
<dbReference type="PRINTS" id="PR01407">
    <property type="entry name" value="BUTYPHLNCDUF"/>
</dbReference>
<dbReference type="SMART" id="SM00589">
    <property type="entry name" value="PRY"/>
    <property type="match status" value="1"/>
</dbReference>
<dbReference type="SUPFAM" id="SSF49899">
    <property type="entry name" value="Concanavalin A-like lectins/glucanases"/>
    <property type="match status" value="1"/>
</dbReference>
<dbReference type="PROSITE" id="PS50188">
    <property type="entry name" value="B302_SPRY"/>
    <property type="match status" value="1"/>
</dbReference>
<reference key="1">
    <citation type="journal article" date="2011" name="J. Proteome Res.">
        <title>Identification of novel proteins from the venom of a cryptic snake Drysdalia coronoides by a combined transcriptomics and proteomics approach.</title>
        <authorList>
            <person name="Chatrath S.T."/>
            <person name="Chapeaurouge A."/>
            <person name="Lin Q."/>
            <person name="Lim T.K."/>
            <person name="Dunstan N."/>
            <person name="Mirtschin P."/>
            <person name="Kumar P.P."/>
            <person name="Kini R.M."/>
        </authorList>
    </citation>
    <scope>NUCLEOTIDE SEQUENCE [MRNA]</scope>
    <scope>IDENTIFICATION BY MASS SPECTROMETRY</scope>
    <scope>SUBCELLULAR LOCATION</scope>
    <source>
        <tissue>Venom</tissue>
        <tissue>Venom gland</tissue>
    </source>
</reference>
<accession>F8RKW2</accession>
<keyword id="KW-0528">Neurotoxin</keyword>
<keyword id="KW-0964">Secreted</keyword>
<keyword id="KW-0732">Signal</keyword>
<keyword id="KW-0800">Toxin</keyword>
<feature type="signal peptide" evidence="1">
    <location>
        <begin position="1"/>
        <end position="20"/>
    </location>
</feature>
<feature type="chain" id="PRO_0000425500" description="Vespryn-21">
    <location>
        <begin position="21"/>
        <end position="127"/>
    </location>
</feature>
<feature type="propeptide" id="PRO_0000425501" evidence="1">
    <location>
        <begin position="128"/>
        <end position="190"/>
    </location>
</feature>
<feature type="domain" description="B30.2/SPRY" evidence="3">
    <location>
        <begin position="21"/>
        <end position="127"/>
    </location>
</feature>
<protein>
    <recommendedName>
        <fullName evidence="5">Vespryn-21</fullName>
    </recommendedName>
</protein>
<comment type="function">
    <text evidence="2">Neurotoxin that produces dose-dependent hypolocomotion and hyperalgesia in mice. May directly act on the central nervous system, as it is 6500-fold more potent when administered intracerebroventricularly than intraperitoneal.</text>
</comment>
<comment type="subcellular location">
    <subcellularLocation>
        <location evidence="4">Secreted</location>
    </subcellularLocation>
</comment>
<comment type="tissue specificity">
    <text evidence="7">Expressed by the venom gland.</text>
</comment>
<comment type="similarity">
    <text evidence="6">Belongs to the ohanin/vespryn family.</text>
</comment>
<name>VESP_DRYCN</name>